<dbReference type="EMBL" id="CP000436">
    <property type="protein sequence ID" value="ABI24347.1"/>
    <property type="molecule type" value="Genomic_DNA"/>
</dbReference>
<dbReference type="SMR" id="Q0I156"/>
<dbReference type="KEGG" id="hso:HS_0066"/>
<dbReference type="eggNOG" id="COG0197">
    <property type="taxonomic scope" value="Bacteria"/>
</dbReference>
<dbReference type="HOGENOM" id="CLU_078858_2_1_6"/>
<dbReference type="GO" id="GO:0022625">
    <property type="term" value="C:cytosolic large ribosomal subunit"/>
    <property type="evidence" value="ECO:0007669"/>
    <property type="project" value="TreeGrafter"/>
</dbReference>
<dbReference type="GO" id="GO:0019843">
    <property type="term" value="F:rRNA binding"/>
    <property type="evidence" value="ECO:0007669"/>
    <property type="project" value="UniProtKB-UniRule"/>
</dbReference>
<dbReference type="GO" id="GO:0003735">
    <property type="term" value="F:structural constituent of ribosome"/>
    <property type="evidence" value="ECO:0007669"/>
    <property type="project" value="InterPro"/>
</dbReference>
<dbReference type="GO" id="GO:0000049">
    <property type="term" value="F:tRNA binding"/>
    <property type="evidence" value="ECO:0007669"/>
    <property type="project" value="UniProtKB-KW"/>
</dbReference>
<dbReference type="GO" id="GO:0006412">
    <property type="term" value="P:translation"/>
    <property type="evidence" value="ECO:0007669"/>
    <property type="project" value="UniProtKB-UniRule"/>
</dbReference>
<dbReference type="CDD" id="cd01433">
    <property type="entry name" value="Ribosomal_L16_L10e"/>
    <property type="match status" value="1"/>
</dbReference>
<dbReference type="FunFam" id="3.90.1170.10:FF:000001">
    <property type="entry name" value="50S ribosomal protein L16"/>
    <property type="match status" value="1"/>
</dbReference>
<dbReference type="Gene3D" id="3.90.1170.10">
    <property type="entry name" value="Ribosomal protein L10e/L16"/>
    <property type="match status" value="1"/>
</dbReference>
<dbReference type="HAMAP" id="MF_01342">
    <property type="entry name" value="Ribosomal_uL16"/>
    <property type="match status" value="1"/>
</dbReference>
<dbReference type="InterPro" id="IPR047873">
    <property type="entry name" value="Ribosomal_uL16"/>
</dbReference>
<dbReference type="InterPro" id="IPR000114">
    <property type="entry name" value="Ribosomal_uL16_bact-type"/>
</dbReference>
<dbReference type="InterPro" id="IPR020798">
    <property type="entry name" value="Ribosomal_uL16_CS"/>
</dbReference>
<dbReference type="InterPro" id="IPR016180">
    <property type="entry name" value="Ribosomal_uL16_dom"/>
</dbReference>
<dbReference type="InterPro" id="IPR036920">
    <property type="entry name" value="Ribosomal_uL16_sf"/>
</dbReference>
<dbReference type="NCBIfam" id="TIGR01164">
    <property type="entry name" value="rplP_bact"/>
    <property type="match status" value="1"/>
</dbReference>
<dbReference type="PANTHER" id="PTHR12220">
    <property type="entry name" value="50S/60S RIBOSOMAL PROTEIN L16"/>
    <property type="match status" value="1"/>
</dbReference>
<dbReference type="PANTHER" id="PTHR12220:SF13">
    <property type="entry name" value="LARGE RIBOSOMAL SUBUNIT PROTEIN UL16M"/>
    <property type="match status" value="1"/>
</dbReference>
<dbReference type="Pfam" id="PF00252">
    <property type="entry name" value="Ribosomal_L16"/>
    <property type="match status" value="1"/>
</dbReference>
<dbReference type="PRINTS" id="PR00060">
    <property type="entry name" value="RIBOSOMALL16"/>
</dbReference>
<dbReference type="SUPFAM" id="SSF54686">
    <property type="entry name" value="Ribosomal protein L16p/L10e"/>
    <property type="match status" value="1"/>
</dbReference>
<dbReference type="PROSITE" id="PS00586">
    <property type="entry name" value="RIBOSOMAL_L16_1"/>
    <property type="match status" value="1"/>
</dbReference>
<dbReference type="PROSITE" id="PS00701">
    <property type="entry name" value="RIBOSOMAL_L16_2"/>
    <property type="match status" value="1"/>
</dbReference>
<feature type="chain" id="PRO_1000054631" description="Large ribosomal subunit protein uL16">
    <location>
        <begin position="1"/>
        <end position="136"/>
    </location>
</feature>
<name>RL16_HISS1</name>
<protein>
    <recommendedName>
        <fullName evidence="1">Large ribosomal subunit protein uL16</fullName>
    </recommendedName>
    <alternativeName>
        <fullName evidence="2">50S ribosomal protein L16</fullName>
    </alternativeName>
</protein>
<reference key="1">
    <citation type="journal article" date="2007" name="J. Bacteriol.">
        <title>Complete genome sequence of Haemophilus somnus (Histophilus somni) strain 129Pt and comparison to Haemophilus ducreyi 35000HP and Haemophilus influenzae Rd.</title>
        <authorList>
            <person name="Challacombe J.F."/>
            <person name="Duncan A.J."/>
            <person name="Brettin T.S."/>
            <person name="Bruce D."/>
            <person name="Chertkov O."/>
            <person name="Detter J.C."/>
            <person name="Han C.S."/>
            <person name="Misra M."/>
            <person name="Richardson P."/>
            <person name="Tapia R."/>
            <person name="Thayer N."/>
            <person name="Xie G."/>
            <person name="Inzana T.J."/>
        </authorList>
    </citation>
    <scope>NUCLEOTIDE SEQUENCE [LARGE SCALE GENOMIC DNA]</scope>
    <source>
        <strain>129Pt</strain>
    </source>
</reference>
<keyword id="KW-0687">Ribonucleoprotein</keyword>
<keyword id="KW-0689">Ribosomal protein</keyword>
<keyword id="KW-0694">RNA-binding</keyword>
<keyword id="KW-0699">rRNA-binding</keyword>
<keyword id="KW-0820">tRNA-binding</keyword>
<sequence length="136" mass="15223">MLQPKRTKFRKVHKGRNRGIAAGTEVSFGTFGLKAVGRGRLTARQIEAARRAMTRAVKRQGKIWIRVFPDKPITEKPLEVRMGKGKGNVEYWVALIQPGKVMYEMDGVSEEVARHAFALAAAKLPIKTTFVTKTVM</sequence>
<proteinExistence type="inferred from homology"/>
<evidence type="ECO:0000255" key="1">
    <source>
        <dbReference type="HAMAP-Rule" id="MF_01342"/>
    </source>
</evidence>
<evidence type="ECO:0000305" key="2"/>
<gene>
    <name evidence="1" type="primary">rplP</name>
    <name type="ordered locus">HS_0066</name>
</gene>
<comment type="function">
    <text evidence="1">Binds 23S rRNA and is also seen to make contacts with the A and possibly P site tRNAs.</text>
</comment>
<comment type="subunit">
    <text evidence="1">Part of the 50S ribosomal subunit.</text>
</comment>
<comment type="similarity">
    <text evidence="1">Belongs to the universal ribosomal protein uL16 family.</text>
</comment>
<organism>
    <name type="scientific">Histophilus somni (strain 129Pt)</name>
    <name type="common">Haemophilus somnus</name>
    <dbReference type="NCBI Taxonomy" id="205914"/>
    <lineage>
        <taxon>Bacteria</taxon>
        <taxon>Pseudomonadati</taxon>
        <taxon>Pseudomonadota</taxon>
        <taxon>Gammaproteobacteria</taxon>
        <taxon>Pasteurellales</taxon>
        <taxon>Pasteurellaceae</taxon>
        <taxon>Histophilus</taxon>
    </lineage>
</organism>
<accession>Q0I156</accession>